<evidence type="ECO:0000255" key="1">
    <source>
        <dbReference type="PROSITE-ProRule" id="PRU00214"/>
    </source>
</evidence>
<evidence type="ECO:0000256" key="2">
    <source>
        <dbReference type="SAM" id="MobiDB-lite"/>
    </source>
</evidence>
<evidence type="ECO:0000269" key="3">
    <source>
    </source>
</evidence>
<evidence type="ECO:0000269" key="4">
    <source>
    </source>
</evidence>
<evidence type="ECO:0000305" key="5"/>
<keyword id="KW-1267">Proteomics identification</keyword>
<keyword id="KW-1185">Reference proteome</keyword>
<proteinExistence type="evidence at protein level"/>
<protein>
    <recommendedName>
        <fullName>Ubiquitin domain-containing protein 1</fullName>
    </recommendedName>
</protein>
<reference key="1">
    <citation type="journal article" date="2004" name="Nat. Genet.">
        <title>Complete sequencing and characterization of 21,243 full-length human cDNAs.</title>
        <authorList>
            <person name="Ota T."/>
            <person name="Suzuki Y."/>
            <person name="Nishikawa T."/>
            <person name="Otsuki T."/>
            <person name="Sugiyama T."/>
            <person name="Irie R."/>
            <person name="Wakamatsu A."/>
            <person name="Hayashi K."/>
            <person name="Sato H."/>
            <person name="Nagai K."/>
            <person name="Kimura K."/>
            <person name="Makita H."/>
            <person name="Sekine M."/>
            <person name="Obayashi M."/>
            <person name="Nishi T."/>
            <person name="Shibahara T."/>
            <person name="Tanaka T."/>
            <person name="Ishii S."/>
            <person name="Yamamoto J."/>
            <person name="Saito K."/>
            <person name="Kawai Y."/>
            <person name="Isono Y."/>
            <person name="Nakamura Y."/>
            <person name="Nagahari K."/>
            <person name="Murakami K."/>
            <person name="Yasuda T."/>
            <person name="Iwayanagi T."/>
            <person name="Wagatsuma M."/>
            <person name="Shiratori A."/>
            <person name="Sudo H."/>
            <person name="Hosoiri T."/>
            <person name="Kaku Y."/>
            <person name="Kodaira H."/>
            <person name="Kondo H."/>
            <person name="Sugawara M."/>
            <person name="Takahashi M."/>
            <person name="Kanda K."/>
            <person name="Yokoi T."/>
            <person name="Furuya T."/>
            <person name="Kikkawa E."/>
            <person name="Omura Y."/>
            <person name="Abe K."/>
            <person name="Kamihara K."/>
            <person name="Katsuta N."/>
            <person name="Sato K."/>
            <person name="Tanikawa M."/>
            <person name="Yamazaki M."/>
            <person name="Ninomiya K."/>
            <person name="Ishibashi T."/>
            <person name="Yamashita H."/>
            <person name="Murakawa K."/>
            <person name="Fujimori K."/>
            <person name="Tanai H."/>
            <person name="Kimata M."/>
            <person name="Watanabe M."/>
            <person name="Hiraoka S."/>
            <person name="Chiba Y."/>
            <person name="Ishida S."/>
            <person name="Ono Y."/>
            <person name="Takiguchi S."/>
            <person name="Watanabe S."/>
            <person name="Yosida M."/>
            <person name="Hotuta T."/>
            <person name="Kusano J."/>
            <person name="Kanehori K."/>
            <person name="Takahashi-Fujii A."/>
            <person name="Hara H."/>
            <person name="Tanase T.-O."/>
            <person name="Nomura Y."/>
            <person name="Togiya S."/>
            <person name="Komai F."/>
            <person name="Hara R."/>
            <person name="Takeuchi K."/>
            <person name="Arita M."/>
            <person name="Imose N."/>
            <person name="Musashino K."/>
            <person name="Yuuki H."/>
            <person name="Oshima A."/>
            <person name="Sasaki N."/>
            <person name="Aotsuka S."/>
            <person name="Yoshikawa Y."/>
            <person name="Matsunawa H."/>
            <person name="Ichihara T."/>
            <person name="Shiohata N."/>
            <person name="Sano S."/>
            <person name="Moriya S."/>
            <person name="Momiyama H."/>
            <person name="Satoh N."/>
            <person name="Takami S."/>
            <person name="Terashima Y."/>
            <person name="Suzuki O."/>
            <person name="Nakagawa S."/>
            <person name="Senoh A."/>
            <person name="Mizoguchi H."/>
            <person name="Goto Y."/>
            <person name="Shimizu F."/>
            <person name="Wakebe H."/>
            <person name="Hishigaki H."/>
            <person name="Watanabe T."/>
            <person name="Sugiyama A."/>
            <person name="Takemoto M."/>
            <person name="Kawakami B."/>
            <person name="Yamazaki M."/>
            <person name="Watanabe K."/>
            <person name="Kumagai A."/>
            <person name="Itakura S."/>
            <person name="Fukuzumi Y."/>
            <person name="Fujimori Y."/>
            <person name="Komiyama M."/>
            <person name="Tashiro H."/>
            <person name="Tanigami A."/>
            <person name="Fujiwara T."/>
            <person name="Ono T."/>
            <person name="Yamada K."/>
            <person name="Fujii Y."/>
            <person name="Ozaki K."/>
            <person name="Hirao M."/>
            <person name="Ohmori Y."/>
            <person name="Kawabata A."/>
            <person name="Hikiji T."/>
            <person name="Kobatake N."/>
            <person name="Inagaki H."/>
            <person name="Ikema Y."/>
            <person name="Okamoto S."/>
            <person name="Okitani R."/>
            <person name="Kawakami T."/>
            <person name="Noguchi S."/>
            <person name="Itoh T."/>
            <person name="Shigeta K."/>
            <person name="Senba T."/>
            <person name="Matsumura K."/>
            <person name="Nakajima Y."/>
            <person name="Mizuno T."/>
            <person name="Morinaga M."/>
            <person name="Sasaki M."/>
            <person name="Togashi T."/>
            <person name="Oyama M."/>
            <person name="Hata H."/>
            <person name="Watanabe M."/>
            <person name="Komatsu T."/>
            <person name="Mizushima-Sugano J."/>
            <person name="Satoh T."/>
            <person name="Shirai Y."/>
            <person name="Takahashi Y."/>
            <person name="Nakagawa K."/>
            <person name="Okumura K."/>
            <person name="Nagase T."/>
            <person name="Nomura N."/>
            <person name="Kikuchi H."/>
            <person name="Masuho Y."/>
            <person name="Yamashita R."/>
            <person name="Nakai K."/>
            <person name="Yada T."/>
            <person name="Nakamura Y."/>
            <person name="Ohara O."/>
            <person name="Isogai T."/>
            <person name="Sugano S."/>
        </authorList>
    </citation>
    <scope>NUCLEOTIDE SEQUENCE [LARGE SCALE MRNA]</scope>
    <source>
        <tissue>Embryo</tissue>
    </source>
</reference>
<reference key="2">
    <citation type="submission" date="2005-04" db="EMBL/GenBank/DDBJ databases">
        <authorList>
            <person name="Suzuki Y."/>
            <person name="Sugano S."/>
            <person name="Totoki Y."/>
            <person name="Toyoda A."/>
            <person name="Takeda T."/>
            <person name="Sakaki Y."/>
            <person name="Tanaka A."/>
            <person name="Yokoyama S."/>
        </authorList>
    </citation>
    <scope>NUCLEOTIDE SEQUENCE [LARGE SCALE MRNA]</scope>
    <source>
        <tissue>Coronary artery</tissue>
    </source>
</reference>
<reference key="3">
    <citation type="journal article" date="2004" name="Nature">
        <title>The DNA sequence and comparative analysis of human chromosome 10.</title>
        <authorList>
            <person name="Deloukas P."/>
            <person name="Earthrowl M.E."/>
            <person name="Grafham D.V."/>
            <person name="Rubenfield M."/>
            <person name="French L."/>
            <person name="Steward C.A."/>
            <person name="Sims S.K."/>
            <person name="Jones M.C."/>
            <person name="Searle S."/>
            <person name="Scott C."/>
            <person name="Howe K."/>
            <person name="Hunt S.E."/>
            <person name="Andrews T.D."/>
            <person name="Gilbert J.G.R."/>
            <person name="Swarbreck D."/>
            <person name="Ashurst J.L."/>
            <person name="Taylor A."/>
            <person name="Battles J."/>
            <person name="Bird C.P."/>
            <person name="Ainscough R."/>
            <person name="Almeida J.P."/>
            <person name="Ashwell R.I.S."/>
            <person name="Ambrose K.D."/>
            <person name="Babbage A.K."/>
            <person name="Bagguley C.L."/>
            <person name="Bailey J."/>
            <person name="Banerjee R."/>
            <person name="Bates K."/>
            <person name="Beasley H."/>
            <person name="Bray-Allen S."/>
            <person name="Brown A.J."/>
            <person name="Brown J.Y."/>
            <person name="Burford D.C."/>
            <person name="Burrill W."/>
            <person name="Burton J."/>
            <person name="Cahill P."/>
            <person name="Camire D."/>
            <person name="Carter N.P."/>
            <person name="Chapman J.C."/>
            <person name="Clark S.Y."/>
            <person name="Clarke G."/>
            <person name="Clee C.M."/>
            <person name="Clegg S."/>
            <person name="Corby N."/>
            <person name="Coulson A."/>
            <person name="Dhami P."/>
            <person name="Dutta I."/>
            <person name="Dunn M."/>
            <person name="Faulkner L."/>
            <person name="Frankish A."/>
            <person name="Frankland J.A."/>
            <person name="Garner P."/>
            <person name="Garnett J."/>
            <person name="Gribble S."/>
            <person name="Griffiths C."/>
            <person name="Grocock R."/>
            <person name="Gustafson E."/>
            <person name="Hammond S."/>
            <person name="Harley J.L."/>
            <person name="Hart E."/>
            <person name="Heath P.D."/>
            <person name="Ho T.P."/>
            <person name="Hopkins B."/>
            <person name="Horne J."/>
            <person name="Howden P.J."/>
            <person name="Huckle E."/>
            <person name="Hynds C."/>
            <person name="Johnson C."/>
            <person name="Johnson D."/>
            <person name="Kana A."/>
            <person name="Kay M."/>
            <person name="Kimberley A.M."/>
            <person name="Kershaw J.K."/>
            <person name="Kokkinaki M."/>
            <person name="Laird G.K."/>
            <person name="Lawlor S."/>
            <person name="Lee H.M."/>
            <person name="Leongamornlert D.A."/>
            <person name="Laird G."/>
            <person name="Lloyd C."/>
            <person name="Lloyd D.M."/>
            <person name="Loveland J."/>
            <person name="Lovell J."/>
            <person name="McLaren S."/>
            <person name="McLay K.E."/>
            <person name="McMurray A."/>
            <person name="Mashreghi-Mohammadi M."/>
            <person name="Matthews L."/>
            <person name="Milne S."/>
            <person name="Nickerson T."/>
            <person name="Nguyen M."/>
            <person name="Overton-Larty E."/>
            <person name="Palmer S.A."/>
            <person name="Pearce A.V."/>
            <person name="Peck A.I."/>
            <person name="Pelan S."/>
            <person name="Phillimore B."/>
            <person name="Porter K."/>
            <person name="Rice C.M."/>
            <person name="Rogosin A."/>
            <person name="Ross M.T."/>
            <person name="Sarafidou T."/>
            <person name="Sehra H.K."/>
            <person name="Shownkeen R."/>
            <person name="Skuce C.D."/>
            <person name="Smith M."/>
            <person name="Standring L."/>
            <person name="Sycamore N."/>
            <person name="Tester J."/>
            <person name="Thorpe A."/>
            <person name="Torcasso W."/>
            <person name="Tracey A."/>
            <person name="Tromans A."/>
            <person name="Tsolas J."/>
            <person name="Wall M."/>
            <person name="Walsh J."/>
            <person name="Wang H."/>
            <person name="Weinstock K."/>
            <person name="West A.P."/>
            <person name="Willey D.L."/>
            <person name="Whitehead S.L."/>
            <person name="Wilming L."/>
            <person name="Wray P.W."/>
            <person name="Young L."/>
            <person name="Chen Y."/>
            <person name="Lovering R.C."/>
            <person name="Moschonas N.K."/>
            <person name="Siebert R."/>
            <person name="Fechtel K."/>
            <person name="Bentley D."/>
            <person name="Durbin R.M."/>
            <person name="Hubbard T."/>
            <person name="Doucette-Stamm L."/>
            <person name="Beck S."/>
            <person name="Smith D.R."/>
            <person name="Rogers J."/>
        </authorList>
    </citation>
    <scope>NUCLEOTIDE SEQUENCE [LARGE SCALE GENOMIC DNA]</scope>
</reference>
<reference key="4">
    <citation type="submission" date="2005-09" db="EMBL/GenBank/DDBJ databases">
        <authorList>
            <person name="Mural R.J."/>
            <person name="Istrail S."/>
            <person name="Sutton G.G."/>
            <person name="Florea L."/>
            <person name="Halpern A.L."/>
            <person name="Mobarry C.M."/>
            <person name="Lippert R."/>
            <person name="Walenz B."/>
            <person name="Shatkay H."/>
            <person name="Dew I."/>
            <person name="Miller J.R."/>
            <person name="Flanigan M.J."/>
            <person name="Edwards N.J."/>
            <person name="Bolanos R."/>
            <person name="Fasulo D."/>
            <person name="Halldorsson B.V."/>
            <person name="Hannenhalli S."/>
            <person name="Turner R."/>
            <person name="Yooseph S."/>
            <person name="Lu F."/>
            <person name="Nusskern D.R."/>
            <person name="Shue B.C."/>
            <person name="Zheng X.H."/>
            <person name="Zhong F."/>
            <person name="Delcher A.L."/>
            <person name="Huson D.H."/>
            <person name="Kravitz S.A."/>
            <person name="Mouchard L."/>
            <person name="Reinert K."/>
            <person name="Remington K.A."/>
            <person name="Clark A.G."/>
            <person name="Waterman M.S."/>
            <person name="Eichler E.E."/>
            <person name="Adams M.D."/>
            <person name="Hunkapiller M.W."/>
            <person name="Myers E.W."/>
            <person name="Venter J.C."/>
        </authorList>
    </citation>
    <scope>NUCLEOTIDE SEQUENCE [LARGE SCALE GENOMIC DNA]</scope>
</reference>
<reference key="5">
    <citation type="journal article" date="2004" name="Genome Res.">
        <title>The status, quality, and expansion of the NIH full-length cDNA project: the Mammalian Gene Collection (MGC).</title>
        <authorList>
            <consortium name="The MGC Project Team"/>
        </authorList>
    </citation>
    <scope>NUCLEOTIDE SEQUENCE [LARGE SCALE MRNA]</scope>
    <source>
        <tissue>Placenta</tissue>
    </source>
</reference>
<reference key="6">
    <citation type="journal article" date="2014" name="Biochem. Biophys. Res. Commun.">
        <title>The UbL protein UBTD1 stably interacts with the UBE2D family of E2 ubiquitin conjugating enzymes.</title>
        <authorList>
            <person name="Uhler J.P."/>
            <person name="Spaahr H."/>
            <person name="Farge G."/>
            <person name="Clavel S."/>
            <person name="Larsson N.G."/>
            <person name="Falkenberg M."/>
            <person name="Samuelsson T."/>
            <person name="Gustafsson C.M."/>
        </authorList>
    </citation>
    <scope>INTERACTION WITH UBE2D3</scope>
</reference>
<reference key="7">
    <citation type="journal article" date="2015" name="J. Pathol.">
        <title>UBTD1 induces cellular senescence through an UBTD1-Mdm2/p53 positive feedback loop.</title>
        <authorList>
            <person name="Zhang X.W."/>
            <person name="Wang X.F."/>
            <person name="Ni S.J."/>
            <person name="Qin W."/>
            <person name="Zhao L.Q."/>
            <person name="Hua R.X."/>
            <person name="Lu Y.W."/>
            <person name="Li J."/>
            <person name="Dimri G.P."/>
            <person name="Guo W.J."/>
        </authorList>
    </citation>
    <scope>FUNCTION</scope>
    <scope>INDUCTION BY CYTOTOXIC AGENTS</scope>
</reference>
<comment type="function">
    <text evidence="4">May be involved in the regulation of cellular senescence through a positive feedback loop with TP53. Is a TP53 downstream target gene that increases the stability of TP53 protein by promoting the ubiquitination and degradation of MDM2.</text>
</comment>
<comment type="subunit">
    <text evidence="3">Interacts with UBTD1.</text>
</comment>
<comment type="interaction">
    <interactant intactId="EBI-745871">
        <id>Q9HAC8</id>
    </interactant>
    <interactant intactId="EBI-2340316">
        <id>O15344</id>
        <label>MID1</label>
    </interactant>
    <organismsDiffer>false</organismsDiffer>
    <experiments>6</experiments>
</comment>
<comment type="interaction">
    <interactant intactId="EBI-745871">
        <id>Q9HAC8</id>
    </interactant>
    <interactant intactId="EBI-10172526">
        <id>Q9UJV3-2</id>
        <label>MID2</label>
    </interactant>
    <organismsDiffer>false</organismsDiffer>
    <experiments>3</experiments>
</comment>
<comment type="interaction">
    <interactant intactId="EBI-745871">
        <id>Q9HAC8</id>
    </interactant>
    <interactant intactId="EBI-995714">
        <id>Q9Y605</id>
        <label>MRFAP1</label>
    </interactant>
    <organismsDiffer>false</organismsDiffer>
    <experiments>5</experiments>
</comment>
<comment type="interaction">
    <interactant intactId="EBI-745871">
        <id>Q9HAC8</id>
    </interactant>
    <interactant intactId="EBI-748896">
        <id>Q96HT8</id>
        <label>MRFAP1L1</label>
    </interactant>
    <organismsDiffer>false</organismsDiffer>
    <experiments>8</experiments>
</comment>
<comment type="interaction">
    <interactant intactId="EBI-745871">
        <id>Q9HAC8</id>
    </interactant>
    <interactant intactId="EBI-348482">
        <id>Q99942</id>
        <label>RNF5</label>
    </interactant>
    <organismsDiffer>false</organismsDiffer>
    <experiments>5</experiments>
</comment>
<comment type="interaction">
    <interactant intactId="EBI-745871">
        <id>Q9HAC8</id>
    </interactant>
    <interactant intactId="EBI-11952721">
        <id>Q05BL1</id>
        <label>TP53BP2</label>
    </interactant>
    <organismsDiffer>false</organismsDiffer>
    <experiments>3</experiments>
</comment>
<comment type="interaction">
    <interactant intactId="EBI-745871">
        <id>Q9HAC8</id>
    </interactant>
    <interactant intactId="EBI-359276">
        <id>Q9Y4K3</id>
        <label>TRAF6</label>
    </interactant>
    <organismsDiffer>false</organismsDiffer>
    <experiments>3</experiments>
</comment>
<comment type="interaction">
    <interactant intactId="EBI-745871">
        <id>Q9HAC8</id>
    </interactant>
    <interactant intactId="EBI-739510">
        <id>Q9HCM9</id>
        <label>TRIM39</label>
    </interactant>
    <organismsDiffer>false</organismsDiffer>
    <experiments>4</experiments>
</comment>
<comment type="interaction">
    <interactant intactId="EBI-745871">
        <id>Q9HAC8</id>
    </interactant>
    <interactant intactId="EBI-11523450">
        <id>Q9HCM9-2</id>
        <label>TRIM39</label>
    </interactant>
    <organismsDiffer>false</organismsDiffer>
    <experiments>5</experiments>
</comment>
<comment type="interaction">
    <interactant intactId="EBI-745871">
        <id>Q9HAC8</id>
    </interactant>
    <interactant intactId="EBI-9867283">
        <id>Q86XT4</id>
        <label>TRIM50</label>
    </interactant>
    <organismsDiffer>false</organismsDiffer>
    <experiments>3</experiments>
</comment>
<comment type="interaction">
    <interactant intactId="EBI-745871">
        <id>Q9HAC8</id>
    </interactant>
    <interactant intactId="EBI-743540">
        <id>P51668</id>
        <label>UBE2D1</label>
    </interactant>
    <organismsDiffer>false</organismsDiffer>
    <experiments>3</experiments>
</comment>
<comment type="interaction">
    <interactant intactId="EBI-745871">
        <id>Q9HAC8</id>
    </interactant>
    <interactant intactId="EBI-347677">
        <id>P62837</id>
        <label>UBE2D2</label>
    </interactant>
    <organismsDiffer>false</organismsDiffer>
    <experiments>8</experiments>
</comment>
<comment type="interaction">
    <interactant intactId="EBI-745871">
        <id>Q9HAC8</id>
    </interactant>
    <interactant intactId="EBI-348268">
        <id>P61077</id>
        <label>UBE2D3</label>
    </interactant>
    <organismsDiffer>false</organismsDiffer>
    <experiments>6</experiments>
</comment>
<comment type="interaction">
    <interactant intactId="EBI-745871">
        <id>Q9HAC8</id>
    </interactant>
    <interactant intactId="EBI-745527">
        <id>Q9Y2X8</id>
        <label>UBE2D4</label>
    </interactant>
    <organismsDiffer>false</organismsDiffer>
    <experiments>9</experiments>
</comment>
<comment type="interaction">
    <interactant intactId="EBI-745871">
        <id>Q9HAC8</id>
    </interactant>
    <interactant intactId="EBI-743923">
        <id>O00308</id>
        <label>WWP2</label>
    </interactant>
    <organismsDiffer>false</organismsDiffer>
    <experiments>3</experiments>
</comment>
<comment type="induction">
    <text evidence="3">Induced by cytotoxic agents, it is also increased during premature senescence. the induction seems to be mediated by TP53.</text>
</comment>
<sequence>MGNCVGRQRRERPAAPGHPRKRAGRNEPLKKERLKWKSDYPMTDGQLRSKRDEFWDTAPAFEGRKEIWDALKAAAYAAEANDHELAQAILDGASITLPHGTLCECYDELGNRYQLPIYCLSPPVNLLLEHTEEESLEPPEPPPSVRREFPLKVRLSTGKDVRLSASLPDTVGQLKRQLHAQEGIEPSWQRWFFSGKLLTDRTRLQETKIQKDFVIQVIINQPPPPQD</sequence>
<name>UBTD1_HUMAN</name>
<feature type="chain" id="PRO_0000242674" description="Ubiquitin domain-containing protein 1">
    <location>
        <begin position="1"/>
        <end position="227"/>
    </location>
</feature>
<feature type="domain" description="Ubiquitin-like" evidence="1">
    <location>
        <begin position="149"/>
        <end position="224"/>
    </location>
</feature>
<feature type="region of interest" description="Disordered" evidence="2">
    <location>
        <begin position="1"/>
        <end position="35"/>
    </location>
</feature>
<feature type="compositionally biased region" description="Basic and acidic residues" evidence="2">
    <location>
        <begin position="24"/>
        <end position="35"/>
    </location>
</feature>
<feature type="sequence conflict" description="In Ref. 2; BAD96317." evidence="5" ref="2">
    <original>E</original>
    <variation>G</variation>
    <location>
        <position position="133"/>
    </location>
</feature>
<feature type="sequence conflict" description="In Ref. 2; BAD96317." evidence="5" ref="2">
    <original>Q</original>
    <variation>L</variation>
    <location>
        <position position="173"/>
    </location>
</feature>
<organism>
    <name type="scientific">Homo sapiens</name>
    <name type="common">Human</name>
    <dbReference type="NCBI Taxonomy" id="9606"/>
    <lineage>
        <taxon>Eukaryota</taxon>
        <taxon>Metazoa</taxon>
        <taxon>Chordata</taxon>
        <taxon>Craniata</taxon>
        <taxon>Vertebrata</taxon>
        <taxon>Euteleostomi</taxon>
        <taxon>Mammalia</taxon>
        <taxon>Eutheria</taxon>
        <taxon>Euarchontoglires</taxon>
        <taxon>Primates</taxon>
        <taxon>Haplorrhini</taxon>
        <taxon>Catarrhini</taxon>
        <taxon>Hominidae</taxon>
        <taxon>Homo</taxon>
    </lineage>
</organism>
<gene>
    <name type="primary">UBTD1</name>
</gene>
<accession>Q9HAC8</accession>
<accession>D3DR57</accession>
<accession>Q53HI3</accession>
<dbReference type="EMBL" id="AK021869">
    <property type="protein sequence ID" value="BAB13921.1"/>
    <property type="molecule type" value="mRNA"/>
</dbReference>
<dbReference type="EMBL" id="AK222597">
    <property type="protein sequence ID" value="BAD96317.1"/>
    <property type="molecule type" value="mRNA"/>
</dbReference>
<dbReference type="EMBL" id="AL359388">
    <property type="status" value="NOT_ANNOTATED_CDS"/>
    <property type="molecule type" value="Genomic_DNA"/>
</dbReference>
<dbReference type="EMBL" id="CH471066">
    <property type="protein sequence ID" value="EAW49918.1"/>
    <property type="molecule type" value="Genomic_DNA"/>
</dbReference>
<dbReference type="EMBL" id="CH471066">
    <property type="protein sequence ID" value="EAW49919.1"/>
    <property type="molecule type" value="Genomic_DNA"/>
</dbReference>
<dbReference type="EMBL" id="BC007331">
    <property type="protein sequence ID" value="AAH07331.1"/>
    <property type="molecule type" value="mRNA"/>
</dbReference>
<dbReference type="CCDS" id="CCDS7465.1"/>
<dbReference type="RefSeq" id="NP_079230.1">
    <property type="nucleotide sequence ID" value="NM_024954.5"/>
</dbReference>
<dbReference type="SMR" id="Q9HAC8"/>
<dbReference type="BioGRID" id="123073">
    <property type="interactions" value="43"/>
</dbReference>
<dbReference type="FunCoup" id="Q9HAC8">
    <property type="interactions" value="260"/>
</dbReference>
<dbReference type="IntAct" id="Q9HAC8">
    <property type="interactions" value="26"/>
</dbReference>
<dbReference type="STRING" id="9606.ENSP00000359698"/>
<dbReference type="iPTMnet" id="Q9HAC8"/>
<dbReference type="PhosphoSitePlus" id="Q9HAC8"/>
<dbReference type="SwissPalm" id="Q9HAC8"/>
<dbReference type="BioMuta" id="UBTD1"/>
<dbReference type="DMDM" id="74752759"/>
<dbReference type="jPOST" id="Q9HAC8"/>
<dbReference type="MassIVE" id="Q9HAC8"/>
<dbReference type="PaxDb" id="9606-ENSP00000359698"/>
<dbReference type="PeptideAtlas" id="Q9HAC8"/>
<dbReference type="ProteomicsDB" id="81395"/>
<dbReference type="Pumba" id="Q9HAC8"/>
<dbReference type="Antibodypedia" id="30969">
    <property type="antibodies" value="313 antibodies from 28 providers"/>
</dbReference>
<dbReference type="DNASU" id="80019"/>
<dbReference type="Ensembl" id="ENST00000370664.4">
    <property type="protein sequence ID" value="ENSP00000359698.3"/>
    <property type="gene ID" value="ENSG00000165886.5"/>
</dbReference>
<dbReference type="GeneID" id="80019"/>
<dbReference type="KEGG" id="hsa:80019"/>
<dbReference type="MANE-Select" id="ENST00000370664.4">
    <property type="protein sequence ID" value="ENSP00000359698.3"/>
    <property type="RefSeq nucleotide sequence ID" value="NM_024954.5"/>
    <property type="RefSeq protein sequence ID" value="NP_079230.1"/>
</dbReference>
<dbReference type="UCSC" id="uc001knv.2">
    <property type="organism name" value="human"/>
</dbReference>
<dbReference type="AGR" id="HGNC:25683"/>
<dbReference type="CTD" id="80019"/>
<dbReference type="DisGeNET" id="80019"/>
<dbReference type="GeneCards" id="UBTD1"/>
<dbReference type="HGNC" id="HGNC:25683">
    <property type="gene designation" value="UBTD1"/>
</dbReference>
<dbReference type="HPA" id="ENSG00000165886">
    <property type="expression patterns" value="Low tissue specificity"/>
</dbReference>
<dbReference type="MIM" id="616388">
    <property type="type" value="gene"/>
</dbReference>
<dbReference type="neXtProt" id="NX_Q9HAC8"/>
<dbReference type="OpenTargets" id="ENSG00000165886"/>
<dbReference type="PharmGKB" id="PA134976337"/>
<dbReference type="VEuPathDB" id="HostDB:ENSG00000165886"/>
<dbReference type="eggNOG" id="KOG0013">
    <property type="taxonomic scope" value="Eukaryota"/>
</dbReference>
<dbReference type="GeneTree" id="ENSGT00940000158630"/>
<dbReference type="HOGENOM" id="CLU_070348_0_0_1"/>
<dbReference type="InParanoid" id="Q9HAC8"/>
<dbReference type="OMA" id="GCMGRYL"/>
<dbReference type="OrthoDB" id="1640476at2759"/>
<dbReference type="PAN-GO" id="Q9HAC8">
    <property type="GO annotations" value="0 GO annotations based on evolutionary models"/>
</dbReference>
<dbReference type="PhylomeDB" id="Q9HAC8"/>
<dbReference type="TreeFam" id="TF323925"/>
<dbReference type="PathwayCommons" id="Q9HAC8"/>
<dbReference type="SignaLink" id="Q9HAC8"/>
<dbReference type="BioGRID-ORCS" id="80019">
    <property type="hits" value="11 hits in 1152 CRISPR screens"/>
</dbReference>
<dbReference type="ChiTaRS" id="UBTD1">
    <property type="organism name" value="human"/>
</dbReference>
<dbReference type="GenomeRNAi" id="80019"/>
<dbReference type="Pharos" id="Q9HAC8">
    <property type="development level" value="Tdark"/>
</dbReference>
<dbReference type="PRO" id="PR:Q9HAC8"/>
<dbReference type="Proteomes" id="UP000005640">
    <property type="component" value="Chromosome 10"/>
</dbReference>
<dbReference type="RNAct" id="Q9HAC8">
    <property type="molecule type" value="protein"/>
</dbReference>
<dbReference type="Bgee" id="ENSG00000165886">
    <property type="expression patterns" value="Expressed in left testis and 137 other cell types or tissues"/>
</dbReference>
<dbReference type="CDD" id="cd17120">
    <property type="entry name" value="Ubl_UBTD1"/>
    <property type="match status" value="1"/>
</dbReference>
<dbReference type="Gene3D" id="3.10.20.90">
    <property type="entry name" value="Phosphatidylinositol 3-kinase Catalytic Subunit, Chain A, domain 1"/>
    <property type="match status" value="1"/>
</dbReference>
<dbReference type="Gene3D" id="1.20.225.20">
    <property type="entry name" value="Ub domain-containing protein, DC-UbP/UBTD2, N-terminal domain"/>
    <property type="match status" value="1"/>
</dbReference>
<dbReference type="InterPro" id="IPR032752">
    <property type="entry name" value="DC-UbP/UBTD2_N"/>
</dbReference>
<dbReference type="InterPro" id="IPR038169">
    <property type="entry name" value="DC-UbP/UBTD2_N_sf"/>
</dbReference>
<dbReference type="InterPro" id="IPR000626">
    <property type="entry name" value="Ubiquitin-like_dom"/>
</dbReference>
<dbReference type="InterPro" id="IPR029071">
    <property type="entry name" value="Ubiquitin-like_domsf"/>
</dbReference>
<dbReference type="InterPro" id="IPR019956">
    <property type="entry name" value="Ubiquitin_dom"/>
</dbReference>
<dbReference type="InterPro" id="IPR039869">
    <property type="entry name" value="UBTD1/2"/>
</dbReference>
<dbReference type="PANTHER" id="PTHR13609">
    <property type="entry name" value="UBIQUITIN DOMAIN CONTAINING 1 PROTEIN-RELATED"/>
    <property type="match status" value="1"/>
</dbReference>
<dbReference type="Pfam" id="PF16455">
    <property type="entry name" value="UBD"/>
    <property type="match status" value="1"/>
</dbReference>
<dbReference type="Pfam" id="PF00240">
    <property type="entry name" value="ubiquitin"/>
    <property type="match status" value="1"/>
</dbReference>
<dbReference type="PRINTS" id="PR00348">
    <property type="entry name" value="UBIQUITIN"/>
</dbReference>
<dbReference type="SMART" id="SM00213">
    <property type="entry name" value="UBQ"/>
    <property type="match status" value="1"/>
</dbReference>
<dbReference type="SUPFAM" id="SSF54236">
    <property type="entry name" value="Ubiquitin-like"/>
    <property type="match status" value="1"/>
</dbReference>
<dbReference type="PROSITE" id="PS50053">
    <property type="entry name" value="UBIQUITIN_2"/>
    <property type="match status" value="1"/>
</dbReference>